<organism>
    <name type="scientific">Shigella flexneri</name>
    <dbReference type="NCBI Taxonomy" id="623"/>
    <lineage>
        <taxon>Bacteria</taxon>
        <taxon>Pseudomonadati</taxon>
        <taxon>Pseudomonadota</taxon>
        <taxon>Gammaproteobacteria</taxon>
        <taxon>Enterobacterales</taxon>
        <taxon>Enterobacteriaceae</taxon>
        <taxon>Shigella</taxon>
    </lineage>
</organism>
<dbReference type="EMBL" id="AE005674">
    <property type="protein sequence ID" value="AAN43530.2"/>
    <property type="molecule type" value="Genomic_DNA"/>
</dbReference>
<dbReference type="EMBL" id="AE014073">
    <property type="protein sequence ID" value="AAP17358.1"/>
    <property type="molecule type" value="Genomic_DNA"/>
</dbReference>
<dbReference type="RefSeq" id="NP_707823.2">
    <property type="nucleotide sequence ID" value="NC_004337.2"/>
</dbReference>
<dbReference type="RefSeq" id="WP_001274301.1">
    <property type="nucleotide sequence ID" value="NZ_WPGW01000059.1"/>
</dbReference>
<dbReference type="SMR" id="Q83R35"/>
<dbReference type="STRING" id="198214.SF1982"/>
<dbReference type="PaxDb" id="198214-SF1982"/>
<dbReference type="DNASU" id="1078390"/>
<dbReference type="GeneID" id="1025154"/>
<dbReference type="KEGG" id="sfl:SF1982"/>
<dbReference type="KEGG" id="sfx:S2076"/>
<dbReference type="PATRIC" id="fig|198214.7.peg.2368"/>
<dbReference type="HOGENOM" id="CLU_147249_0_2_6"/>
<dbReference type="Proteomes" id="UP000001006">
    <property type="component" value="Chromosome"/>
</dbReference>
<dbReference type="Proteomes" id="UP000002673">
    <property type="component" value="Chromosome"/>
</dbReference>
<dbReference type="GO" id="GO:0009425">
    <property type="term" value="C:bacterial-type flagellum basal body"/>
    <property type="evidence" value="ECO:0007669"/>
    <property type="project" value="UniProtKB-SubCell"/>
</dbReference>
<dbReference type="GO" id="GO:0003774">
    <property type="term" value="F:cytoskeletal motor activity"/>
    <property type="evidence" value="ECO:0007669"/>
    <property type="project" value="InterPro"/>
</dbReference>
<dbReference type="GO" id="GO:0005198">
    <property type="term" value="F:structural molecule activity"/>
    <property type="evidence" value="ECO:0007669"/>
    <property type="project" value="InterPro"/>
</dbReference>
<dbReference type="GO" id="GO:0071973">
    <property type="term" value="P:bacterial-type flagellum-dependent cell motility"/>
    <property type="evidence" value="ECO:0007669"/>
    <property type="project" value="InterPro"/>
</dbReference>
<dbReference type="HAMAP" id="MF_00724">
    <property type="entry name" value="FliE"/>
    <property type="match status" value="1"/>
</dbReference>
<dbReference type="InterPro" id="IPR001624">
    <property type="entry name" value="FliE"/>
</dbReference>
<dbReference type="NCBIfam" id="TIGR00205">
    <property type="entry name" value="fliE"/>
    <property type="match status" value="1"/>
</dbReference>
<dbReference type="PANTHER" id="PTHR34653">
    <property type="match status" value="1"/>
</dbReference>
<dbReference type="PANTHER" id="PTHR34653:SF1">
    <property type="entry name" value="FLAGELLAR HOOK-BASAL BODY COMPLEX PROTEIN FLIE"/>
    <property type="match status" value="1"/>
</dbReference>
<dbReference type="Pfam" id="PF02049">
    <property type="entry name" value="FliE"/>
    <property type="match status" value="1"/>
</dbReference>
<dbReference type="PRINTS" id="PR01006">
    <property type="entry name" value="FLGHOOKFLIE"/>
</dbReference>
<evidence type="ECO:0000250" key="1"/>
<evidence type="ECO:0000255" key="2">
    <source>
        <dbReference type="HAMAP-Rule" id="MF_00724"/>
    </source>
</evidence>
<keyword id="KW-0975">Bacterial flagellum</keyword>
<keyword id="KW-1185">Reference proteome</keyword>
<comment type="subcellular location">
    <subcellularLocation>
        <location evidence="2">Bacterial flagellum basal body</location>
    </subcellularLocation>
</comment>
<comment type="similarity">
    <text evidence="2">Belongs to the FliE family.</text>
</comment>
<protein>
    <recommendedName>
        <fullName evidence="2">Flagellar hook-basal body complex protein FliE</fullName>
    </recommendedName>
</protein>
<accession>Q83R35</accession>
<accession>Q7UAA7</accession>
<gene>
    <name evidence="2" type="primary">fliE</name>
    <name type="ordered locus">SF1982</name>
    <name type="ordered locus">S2076</name>
</gene>
<proteinExistence type="inferred from homology"/>
<reference key="1">
    <citation type="journal article" date="2002" name="Nucleic Acids Res.">
        <title>Genome sequence of Shigella flexneri 2a: insights into pathogenicity through comparison with genomes of Escherichia coli K12 and O157.</title>
        <authorList>
            <person name="Jin Q."/>
            <person name="Yuan Z."/>
            <person name="Xu J."/>
            <person name="Wang Y."/>
            <person name="Shen Y."/>
            <person name="Lu W."/>
            <person name="Wang J."/>
            <person name="Liu H."/>
            <person name="Yang J."/>
            <person name="Yang F."/>
            <person name="Zhang X."/>
            <person name="Zhang J."/>
            <person name="Yang G."/>
            <person name="Wu H."/>
            <person name="Qu D."/>
            <person name="Dong J."/>
            <person name="Sun L."/>
            <person name="Xue Y."/>
            <person name="Zhao A."/>
            <person name="Gao Y."/>
            <person name="Zhu J."/>
            <person name="Kan B."/>
            <person name="Ding K."/>
            <person name="Chen S."/>
            <person name="Cheng H."/>
            <person name="Yao Z."/>
            <person name="He B."/>
            <person name="Chen R."/>
            <person name="Ma D."/>
            <person name="Qiang B."/>
            <person name="Wen Y."/>
            <person name="Hou Y."/>
            <person name="Yu J."/>
        </authorList>
    </citation>
    <scope>NUCLEOTIDE SEQUENCE [LARGE SCALE GENOMIC DNA]</scope>
    <source>
        <strain>301 / Serotype 2a</strain>
    </source>
</reference>
<reference key="2">
    <citation type="journal article" date="2003" name="Infect. Immun.">
        <title>Complete genome sequence and comparative genomics of Shigella flexneri serotype 2a strain 2457T.</title>
        <authorList>
            <person name="Wei J."/>
            <person name="Goldberg M.B."/>
            <person name="Burland V."/>
            <person name="Venkatesan M.M."/>
            <person name="Deng W."/>
            <person name="Fournier G."/>
            <person name="Mayhew G.F."/>
            <person name="Plunkett G. III"/>
            <person name="Rose D.J."/>
            <person name="Darling A."/>
            <person name="Mau B."/>
            <person name="Perna N.T."/>
            <person name="Payne S.M."/>
            <person name="Runyen-Janecky L.J."/>
            <person name="Zhou S."/>
            <person name="Schwartz D.C."/>
            <person name="Blattner F.R."/>
        </authorList>
    </citation>
    <scope>NUCLEOTIDE SEQUENCE [LARGE SCALE GENOMIC DNA]</scope>
    <source>
        <strain>ATCC 700930 / 2457T / Serotype 2a</strain>
    </source>
</reference>
<sequence length="104" mass="11155">MSAIQGIEGVISQLQATAMSARAQESLPQPTISFAGQLHAALDRISDTQTVARTQAEKFTLGEPGVALNDVMTDMQKASVSMQMGIQVRNKLVAAYQEVMSMQV</sequence>
<feature type="initiator methionine" description="Removed" evidence="1">
    <location>
        <position position="1"/>
    </location>
</feature>
<feature type="chain" id="PRO_0000105566" description="Flagellar hook-basal body complex protein FliE">
    <location>
        <begin position="2"/>
        <end position="104"/>
    </location>
</feature>
<name>FLIE_SHIFL</name>